<accession>Q54MC8</accession>
<sequence>MFDPLSSSPDFLTFRTSLNLNQQNNSISSDDIVSKGFIGGNDLSTMMNTMSIDANNNNNNNNNNIDSNNINNINLNGISLCDNKNSIDNNYEETIIRTSNNNNNNSSSSSKANDIVITTTTTTTTTISMTSPTLSSDNRITLYTPPPSPPNGINYFNSSLSLSSNNSSQGVFISQHRMIAMHKISIGQKKKVYTYIYIFNLLFI</sequence>
<protein>
    <recommendedName>
        <fullName>Uncharacterized protein DDB_G0286107</fullName>
    </recommendedName>
</protein>
<organism>
    <name type="scientific">Dictyostelium discoideum</name>
    <name type="common">Social amoeba</name>
    <dbReference type="NCBI Taxonomy" id="44689"/>
    <lineage>
        <taxon>Eukaryota</taxon>
        <taxon>Amoebozoa</taxon>
        <taxon>Evosea</taxon>
        <taxon>Eumycetozoa</taxon>
        <taxon>Dictyostelia</taxon>
        <taxon>Dictyosteliales</taxon>
        <taxon>Dictyosteliaceae</taxon>
        <taxon>Dictyostelium</taxon>
    </lineage>
</organism>
<keyword id="KW-1185">Reference proteome</keyword>
<proteinExistence type="predicted"/>
<name>Y8785_DICDI</name>
<dbReference type="EMBL" id="AAFI02000085">
    <property type="protein sequence ID" value="EAL64432.1"/>
    <property type="molecule type" value="Genomic_DNA"/>
</dbReference>
<dbReference type="RefSeq" id="XP_637906.1">
    <property type="nucleotide sequence ID" value="XM_632814.1"/>
</dbReference>
<dbReference type="PaxDb" id="44689-DDB0218785"/>
<dbReference type="EnsemblProtists" id="EAL64432">
    <property type="protein sequence ID" value="EAL64432"/>
    <property type="gene ID" value="DDB_G0286107"/>
</dbReference>
<dbReference type="GeneID" id="8625417"/>
<dbReference type="KEGG" id="ddi:DDB_G0286107"/>
<dbReference type="VEuPathDB" id="AmoebaDB:DDB_G0286107"/>
<dbReference type="HOGENOM" id="CLU_1345351_0_0_1"/>
<dbReference type="InParanoid" id="Q54MC8"/>
<dbReference type="PRO" id="PR:Q54MC8"/>
<dbReference type="Proteomes" id="UP000002195">
    <property type="component" value="Chromosome 4"/>
</dbReference>
<gene>
    <name type="ORF">DDB_G0286107</name>
</gene>
<reference key="1">
    <citation type="journal article" date="2005" name="Nature">
        <title>The genome of the social amoeba Dictyostelium discoideum.</title>
        <authorList>
            <person name="Eichinger L."/>
            <person name="Pachebat J.A."/>
            <person name="Gloeckner G."/>
            <person name="Rajandream M.A."/>
            <person name="Sucgang R."/>
            <person name="Berriman M."/>
            <person name="Song J."/>
            <person name="Olsen R."/>
            <person name="Szafranski K."/>
            <person name="Xu Q."/>
            <person name="Tunggal B."/>
            <person name="Kummerfeld S."/>
            <person name="Madera M."/>
            <person name="Konfortov B.A."/>
            <person name="Rivero F."/>
            <person name="Bankier A.T."/>
            <person name="Lehmann R."/>
            <person name="Hamlin N."/>
            <person name="Davies R."/>
            <person name="Gaudet P."/>
            <person name="Fey P."/>
            <person name="Pilcher K."/>
            <person name="Chen G."/>
            <person name="Saunders D."/>
            <person name="Sodergren E.J."/>
            <person name="Davis P."/>
            <person name="Kerhornou A."/>
            <person name="Nie X."/>
            <person name="Hall N."/>
            <person name="Anjard C."/>
            <person name="Hemphill L."/>
            <person name="Bason N."/>
            <person name="Farbrother P."/>
            <person name="Desany B."/>
            <person name="Just E."/>
            <person name="Morio T."/>
            <person name="Rost R."/>
            <person name="Churcher C.M."/>
            <person name="Cooper J."/>
            <person name="Haydock S."/>
            <person name="van Driessche N."/>
            <person name="Cronin A."/>
            <person name="Goodhead I."/>
            <person name="Muzny D.M."/>
            <person name="Mourier T."/>
            <person name="Pain A."/>
            <person name="Lu M."/>
            <person name="Harper D."/>
            <person name="Lindsay R."/>
            <person name="Hauser H."/>
            <person name="James K.D."/>
            <person name="Quiles M."/>
            <person name="Madan Babu M."/>
            <person name="Saito T."/>
            <person name="Buchrieser C."/>
            <person name="Wardroper A."/>
            <person name="Felder M."/>
            <person name="Thangavelu M."/>
            <person name="Johnson D."/>
            <person name="Knights A."/>
            <person name="Loulseged H."/>
            <person name="Mungall K.L."/>
            <person name="Oliver K."/>
            <person name="Price C."/>
            <person name="Quail M.A."/>
            <person name="Urushihara H."/>
            <person name="Hernandez J."/>
            <person name="Rabbinowitsch E."/>
            <person name="Steffen D."/>
            <person name="Sanders M."/>
            <person name="Ma J."/>
            <person name="Kohara Y."/>
            <person name="Sharp S."/>
            <person name="Simmonds M.N."/>
            <person name="Spiegler S."/>
            <person name="Tivey A."/>
            <person name="Sugano S."/>
            <person name="White B."/>
            <person name="Walker D."/>
            <person name="Woodward J.R."/>
            <person name="Winckler T."/>
            <person name="Tanaka Y."/>
            <person name="Shaulsky G."/>
            <person name="Schleicher M."/>
            <person name="Weinstock G.M."/>
            <person name="Rosenthal A."/>
            <person name="Cox E.C."/>
            <person name="Chisholm R.L."/>
            <person name="Gibbs R.A."/>
            <person name="Loomis W.F."/>
            <person name="Platzer M."/>
            <person name="Kay R.R."/>
            <person name="Williams J.G."/>
            <person name="Dear P.H."/>
            <person name="Noegel A.A."/>
            <person name="Barrell B.G."/>
            <person name="Kuspa A."/>
        </authorList>
    </citation>
    <scope>NUCLEOTIDE SEQUENCE [LARGE SCALE GENOMIC DNA]</scope>
    <source>
        <strain>AX4</strain>
    </source>
</reference>
<feature type="chain" id="PRO_0000348523" description="Uncharacterized protein DDB_G0286107">
    <location>
        <begin position="1"/>
        <end position="204"/>
    </location>
</feature>